<evidence type="ECO:0000255" key="1">
    <source>
        <dbReference type="HAMAP-Rule" id="MF_00632"/>
    </source>
</evidence>
<feature type="chain" id="PRO_0000261919" description="Nucleotide-binding protein Bd0338">
    <location>
        <begin position="1"/>
        <end position="161"/>
    </location>
</feature>
<keyword id="KW-0547">Nucleotide-binding</keyword>
<keyword id="KW-1185">Reference proteome</keyword>
<protein>
    <recommendedName>
        <fullName evidence="1">Nucleotide-binding protein Bd0338</fullName>
    </recommendedName>
</protein>
<comment type="function">
    <text evidence="1">Nucleotide-binding protein.</text>
</comment>
<comment type="similarity">
    <text evidence="1">Belongs to the YajQ family.</text>
</comment>
<reference key="1">
    <citation type="journal article" date="2004" name="Science">
        <title>A predator unmasked: life cycle of Bdellovibrio bacteriovorus from a genomic perspective.</title>
        <authorList>
            <person name="Rendulic S."/>
            <person name="Jagtap P."/>
            <person name="Rosinus A."/>
            <person name="Eppinger M."/>
            <person name="Baar C."/>
            <person name="Lanz C."/>
            <person name="Keller H."/>
            <person name="Lambert C."/>
            <person name="Evans K.J."/>
            <person name="Goesmann A."/>
            <person name="Meyer F."/>
            <person name="Sockett R.E."/>
            <person name="Schuster S.C."/>
        </authorList>
    </citation>
    <scope>NUCLEOTIDE SEQUENCE [LARGE SCALE GENOMIC DNA]</scope>
    <source>
        <strain>ATCC 15356 / DSM 50701 / NCIMB 9529 / HD100</strain>
    </source>
</reference>
<gene>
    <name type="ordered locus">Bd0338</name>
</gene>
<dbReference type="EMBL" id="BX842646">
    <property type="protein sequence ID" value="CAE77993.1"/>
    <property type="molecule type" value="Genomic_DNA"/>
</dbReference>
<dbReference type="RefSeq" id="WP_011162934.1">
    <property type="nucleotide sequence ID" value="NC_005363.1"/>
</dbReference>
<dbReference type="SMR" id="Q6MQW5"/>
<dbReference type="STRING" id="264462.Bd0338"/>
<dbReference type="GeneID" id="93011470"/>
<dbReference type="KEGG" id="bba:Bd0338"/>
<dbReference type="eggNOG" id="COG1666">
    <property type="taxonomic scope" value="Bacteria"/>
</dbReference>
<dbReference type="HOGENOM" id="CLU_099839_1_0_7"/>
<dbReference type="Proteomes" id="UP000008080">
    <property type="component" value="Chromosome"/>
</dbReference>
<dbReference type="GO" id="GO:0005829">
    <property type="term" value="C:cytosol"/>
    <property type="evidence" value="ECO:0007669"/>
    <property type="project" value="TreeGrafter"/>
</dbReference>
<dbReference type="GO" id="GO:0000166">
    <property type="term" value="F:nucleotide binding"/>
    <property type="evidence" value="ECO:0007669"/>
    <property type="project" value="TreeGrafter"/>
</dbReference>
<dbReference type="CDD" id="cd11740">
    <property type="entry name" value="YajQ_like"/>
    <property type="match status" value="1"/>
</dbReference>
<dbReference type="Gene3D" id="3.30.70.860">
    <property type="match status" value="1"/>
</dbReference>
<dbReference type="Gene3D" id="3.30.70.990">
    <property type="entry name" value="YajQ-like, domain 2"/>
    <property type="match status" value="1"/>
</dbReference>
<dbReference type="HAMAP" id="MF_00632">
    <property type="entry name" value="YajQ"/>
    <property type="match status" value="1"/>
</dbReference>
<dbReference type="InterPro" id="IPR007551">
    <property type="entry name" value="DUF520"/>
</dbReference>
<dbReference type="InterPro" id="IPR035571">
    <property type="entry name" value="UPF0234-like_C"/>
</dbReference>
<dbReference type="InterPro" id="IPR035570">
    <property type="entry name" value="UPF0234_N"/>
</dbReference>
<dbReference type="InterPro" id="IPR036183">
    <property type="entry name" value="YajQ-like_sf"/>
</dbReference>
<dbReference type="NCBIfam" id="NF003819">
    <property type="entry name" value="PRK05412.1"/>
    <property type="match status" value="1"/>
</dbReference>
<dbReference type="PANTHER" id="PTHR30476">
    <property type="entry name" value="UPF0234 PROTEIN YAJQ"/>
    <property type="match status" value="1"/>
</dbReference>
<dbReference type="PANTHER" id="PTHR30476:SF0">
    <property type="entry name" value="UPF0234 PROTEIN YAJQ"/>
    <property type="match status" value="1"/>
</dbReference>
<dbReference type="Pfam" id="PF04461">
    <property type="entry name" value="DUF520"/>
    <property type="match status" value="1"/>
</dbReference>
<dbReference type="SUPFAM" id="SSF89963">
    <property type="entry name" value="YajQ-like"/>
    <property type="match status" value="2"/>
</dbReference>
<proteinExistence type="inferred from homology"/>
<accession>Q6MQW5</accession>
<name>Y338_BDEBA</name>
<organism>
    <name type="scientific">Bdellovibrio bacteriovorus (strain ATCC 15356 / DSM 50701 / NCIMB 9529 / HD100)</name>
    <dbReference type="NCBI Taxonomy" id="264462"/>
    <lineage>
        <taxon>Bacteria</taxon>
        <taxon>Pseudomonadati</taxon>
        <taxon>Bdellovibrionota</taxon>
        <taxon>Bdellovibrionia</taxon>
        <taxon>Bdellovibrionales</taxon>
        <taxon>Pseudobdellovibrionaceae</taxon>
        <taxon>Bdellovibrio</taxon>
    </lineage>
</organism>
<sequence>MPSFDIVSEIDVQEVDNAVNQARKEIEARYDFKGSKAELQWDKKEMVLLAEDDYKIGAMAGILQTKLHRRGIDIKAIKFEKIEEAGGRMLRQKVTLVQGIDREIAKDIIKLIKDSKLKVQPQVADDKLKVTSKSIDELQECISLVRGGNFPLPLQFNNMRA</sequence>